<keyword id="KW-0067">ATP-binding</keyword>
<keyword id="KW-0963">Cytoplasm</keyword>
<keyword id="KW-0227">DNA damage</keyword>
<keyword id="KW-0233">DNA recombination</keyword>
<keyword id="KW-0234">DNA repair</keyword>
<keyword id="KW-0238">DNA-binding</keyword>
<keyword id="KW-0547">Nucleotide-binding</keyword>
<keyword id="KW-0742">SOS response</keyword>
<sequence>MSDRQAALDMALKQIEKQFGKGSIMKLGEQAERRVSTVSSGSLALDVALGVGGYPRGRIIEIYGPESSGKTTVSLHAIAEVQRQGGQAAFIDAEHAMDPVYAQKLGVNIDELLLSQPDTGEQGLEIAEALVRSGAVDIIVIDSVAALVPKAEIEGDMGDSHVGLQARLMSQALRKLSGAINKSKTIAIFINQIREKVGVMFGNPETTPGGRALKFYSTVRLEVRRAEQLKQGNDIVGNKTKVKVVKNKVAPPFRVAEVDIMYGEGISREGEILDMASELDIVQKSGAWYSYNEERLGQGRENSKQFLKENTDLREEIAFFIREHHGISEDSGAEGVEDPTLLD</sequence>
<protein>
    <recommendedName>
        <fullName evidence="1">Protein RecA</fullName>
    </recommendedName>
    <alternativeName>
        <fullName evidence="1">Recombinase A</fullName>
    </alternativeName>
</protein>
<gene>
    <name evidence="1" type="primary">recA</name>
    <name type="ordered locus">BCB4264_A3878</name>
</gene>
<reference key="1">
    <citation type="submission" date="2008-10" db="EMBL/GenBank/DDBJ databases">
        <title>Genome sequence of Bacillus cereus B4264.</title>
        <authorList>
            <person name="Dodson R.J."/>
            <person name="Durkin A.S."/>
            <person name="Rosovitz M.J."/>
            <person name="Rasko D.A."/>
            <person name="Hoffmaster A."/>
            <person name="Ravel J."/>
            <person name="Sutton G."/>
        </authorList>
    </citation>
    <scope>NUCLEOTIDE SEQUENCE [LARGE SCALE GENOMIC DNA]</scope>
    <source>
        <strain>B4264</strain>
    </source>
</reference>
<organism>
    <name type="scientific">Bacillus cereus (strain B4264)</name>
    <dbReference type="NCBI Taxonomy" id="405532"/>
    <lineage>
        <taxon>Bacteria</taxon>
        <taxon>Bacillati</taxon>
        <taxon>Bacillota</taxon>
        <taxon>Bacilli</taxon>
        <taxon>Bacillales</taxon>
        <taxon>Bacillaceae</taxon>
        <taxon>Bacillus</taxon>
        <taxon>Bacillus cereus group</taxon>
    </lineage>
</organism>
<evidence type="ECO:0000255" key="1">
    <source>
        <dbReference type="HAMAP-Rule" id="MF_00268"/>
    </source>
</evidence>
<comment type="function">
    <text evidence="1">Can catalyze the hydrolysis of ATP in the presence of single-stranded DNA, the ATP-dependent uptake of single-stranded DNA by duplex DNA, and the ATP-dependent hybridization of homologous single-stranded DNAs. It interacts with LexA causing its activation and leading to its autocatalytic cleavage.</text>
</comment>
<comment type="subcellular location">
    <subcellularLocation>
        <location evidence="1">Cytoplasm</location>
    </subcellularLocation>
</comment>
<comment type="similarity">
    <text evidence="1">Belongs to the RecA family.</text>
</comment>
<name>RECA_BACC4</name>
<accession>B7HDQ4</accession>
<feature type="chain" id="PRO_1000193289" description="Protein RecA">
    <location>
        <begin position="1"/>
        <end position="343"/>
    </location>
</feature>
<feature type="binding site" evidence="1">
    <location>
        <begin position="64"/>
        <end position="71"/>
    </location>
    <ligand>
        <name>ATP</name>
        <dbReference type="ChEBI" id="CHEBI:30616"/>
    </ligand>
</feature>
<proteinExistence type="inferred from homology"/>
<dbReference type="EMBL" id="CP001176">
    <property type="protein sequence ID" value="ACK63778.1"/>
    <property type="molecule type" value="Genomic_DNA"/>
</dbReference>
<dbReference type="RefSeq" id="WP_001283862.1">
    <property type="nucleotide sequence ID" value="NC_011725.1"/>
</dbReference>
<dbReference type="SMR" id="B7HDQ4"/>
<dbReference type="KEGG" id="bcb:BCB4264_A3878"/>
<dbReference type="HOGENOM" id="CLU_040469_3_2_9"/>
<dbReference type="Proteomes" id="UP000007096">
    <property type="component" value="Chromosome"/>
</dbReference>
<dbReference type="GO" id="GO:0005829">
    <property type="term" value="C:cytosol"/>
    <property type="evidence" value="ECO:0007669"/>
    <property type="project" value="TreeGrafter"/>
</dbReference>
<dbReference type="GO" id="GO:0005524">
    <property type="term" value="F:ATP binding"/>
    <property type="evidence" value="ECO:0007669"/>
    <property type="project" value="UniProtKB-UniRule"/>
</dbReference>
<dbReference type="GO" id="GO:0016887">
    <property type="term" value="F:ATP hydrolysis activity"/>
    <property type="evidence" value="ECO:0007669"/>
    <property type="project" value="InterPro"/>
</dbReference>
<dbReference type="GO" id="GO:0140664">
    <property type="term" value="F:ATP-dependent DNA damage sensor activity"/>
    <property type="evidence" value="ECO:0007669"/>
    <property type="project" value="InterPro"/>
</dbReference>
<dbReference type="GO" id="GO:0003684">
    <property type="term" value="F:damaged DNA binding"/>
    <property type="evidence" value="ECO:0007669"/>
    <property type="project" value="UniProtKB-UniRule"/>
</dbReference>
<dbReference type="GO" id="GO:0003697">
    <property type="term" value="F:single-stranded DNA binding"/>
    <property type="evidence" value="ECO:0007669"/>
    <property type="project" value="UniProtKB-UniRule"/>
</dbReference>
<dbReference type="GO" id="GO:0006310">
    <property type="term" value="P:DNA recombination"/>
    <property type="evidence" value="ECO:0007669"/>
    <property type="project" value="UniProtKB-UniRule"/>
</dbReference>
<dbReference type="GO" id="GO:0006281">
    <property type="term" value="P:DNA repair"/>
    <property type="evidence" value="ECO:0007669"/>
    <property type="project" value="UniProtKB-UniRule"/>
</dbReference>
<dbReference type="GO" id="GO:0009432">
    <property type="term" value="P:SOS response"/>
    <property type="evidence" value="ECO:0007669"/>
    <property type="project" value="UniProtKB-UniRule"/>
</dbReference>
<dbReference type="CDD" id="cd00983">
    <property type="entry name" value="RecA"/>
    <property type="match status" value="1"/>
</dbReference>
<dbReference type="FunFam" id="3.40.50.300:FF:000087">
    <property type="entry name" value="Recombinase RecA"/>
    <property type="match status" value="1"/>
</dbReference>
<dbReference type="Gene3D" id="3.40.50.300">
    <property type="entry name" value="P-loop containing nucleotide triphosphate hydrolases"/>
    <property type="match status" value="1"/>
</dbReference>
<dbReference type="HAMAP" id="MF_00268">
    <property type="entry name" value="RecA"/>
    <property type="match status" value="1"/>
</dbReference>
<dbReference type="InterPro" id="IPR003593">
    <property type="entry name" value="AAA+_ATPase"/>
</dbReference>
<dbReference type="InterPro" id="IPR013765">
    <property type="entry name" value="DNA_recomb/repair_RecA"/>
</dbReference>
<dbReference type="InterPro" id="IPR020584">
    <property type="entry name" value="DNA_recomb/repair_RecA_CS"/>
</dbReference>
<dbReference type="InterPro" id="IPR027417">
    <property type="entry name" value="P-loop_NTPase"/>
</dbReference>
<dbReference type="InterPro" id="IPR049261">
    <property type="entry name" value="RecA-like_C"/>
</dbReference>
<dbReference type="InterPro" id="IPR049428">
    <property type="entry name" value="RecA-like_N"/>
</dbReference>
<dbReference type="InterPro" id="IPR020588">
    <property type="entry name" value="RecA_ATP-bd"/>
</dbReference>
<dbReference type="InterPro" id="IPR023400">
    <property type="entry name" value="RecA_C_sf"/>
</dbReference>
<dbReference type="InterPro" id="IPR020587">
    <property type="entry name" value="RecA_monomer-monomer_interface"/>
</dbReference>
<dbReference type="NCBIfam" id="TIGR02012">
    <property type="entry name" value="tigrfam_recA"/>
    <property type="match status" value="1"/>
</dbReference>
<dbReference type="PANTHER" id="PTHR45900:SF1">
    <property type="entry name" value="MITOCHONDRIAL DNA REPAIR PROTEIN RECA HOMOLOG-RELATED"/>
    <property type="match status" value="1"/>
</dbReference>
<dbReference type="PANTHER" id="PTHR45900">
    <property type="entry name" value="RECA"/>
    <property type="match status" value="1"/>
</dbReference>
<dbReference type="Pfam" id="PF00154">
    <property type="entry name" value="RecA"/>
    <property type="match status" value="1"/>
</dbReference>
<dbReference type="Pfam" id="PF21096">
    <property type="entry name" value="RecA_C"/>
    <property type="match status" value="1"/>
</dbReference>
<dbReference type="PRINTS" id="PR00142">
    <property type="entry name" value="RECA"/>
</dbReference>
<dbReference type="SMART" id="SM00382">
    <property type="entry name" value="AAA"/>
    <property type="match status" value="1"/>
</dbReference>
<dbReference type="SUPFAM" id="SSF52540">
    <property type="entry name" value="P-loop containing nucleoside triphosphate hydrolases"/>
    <property type="match status" value="1"/>
</dbReference>
<dbReference type="SUPFAM" id="SSF54752">
    <property type="entry name" value="RecA protein, C-terminal domain"/>
    <property type="match status" value="1"/>
</dbReference>
<dbReference type="PROSITE" id="PS00321">
    <property type="entry name" value="RECA_1"/>
    <property type="match status" value="1"/>
</dbReference>
<dbReference type="PROSITE" id="PS50162">
    <property type="entry name" value="RECA_2"/>
    <property type="match status" value="1"/>
</dbReference>
<dbReference type="PROSITE" id="PS50163">
    <property type="entry name" value="RECA_3"/>
    <property type="match status" value="1"/>
</dbReference>